<sequence>MARVKRGVIARARHKKVLKAAKGYYGARSRVYRVAFQAVIKAGQYAYRDRRQRKRQFRQLWIARINAATRQNGLSYSKFINGLKKASVEIDRKILADIAVFDKVAFTALVEKAKSAL</sequence>
<protein>
    <recommendedName>
        <fullName evidence="1">Large ribosomal subunit protein bL20</fullName>
    </recommendedName>
    <alternativeName>
        <fullName evidence="2">50S ribosomal protein L20</fullName>
    </alternativeName>
</protein>
<dbReference type="EMBL" id="CP000947">
    <property type="protein sequence ID" value="ACA31090.1"/>
    <property type="molecule type" value="Genomic_DNA"/>
</dbReference>
<dbReference type="RefSeq" id="WP_011609028.1">
    <property type="nucleotide sequence ID" value="NC_010519.1"/>
</dbReference>
<dbReference type="SMR" id="B0UU75"/>
<dbReference type="STRING" id="228400.HSM_1354"/>
<dbReference type="GeneID" id="31487652"/>
<dbReference type="KEGG" id="hsm:HSM_1354"/>
<dbReference type="HOGENOM" id="CLU_123265_0_1_6"/>
<dbReference type="GO" id="GO:1990904">
    <property type="term" value="C:ribonucleoprotein complex"/>
    <property type="evidence" value="ECO:0007669"/>
    <property type="project" value="UniProtKB-KW"/>
</dbReference>
<dbReference type="GO" id="GO:0005840">
    <property type="term" value="C:ribosome"/>
    <property type="evidence" value="ECO:0007669"/>
    <property type="project" value="UniProtKB-KW"/>
</dbReference>
<dbReference type="GO" id="GO:0019843">
    <property type="term" value="F:rRNA binding"/>
    <property type="evidence" value="ECO:0007669"/>
    <property type="project" value="UniProtKB-UniRule"/>
</dbReference>
<dbReference type="GO" id="GO:0003735">
    <property type="term" value="F:structural constituent of ribosome"/>
    <property type="evidence" value="ECO:0007669"/>
    <property type="project" value="InterPro"/>
</dbReference>
<dbReference type="GO" id="GO:0000027">
    <property type="term" value="P:ribosomal large subunit assembly"/>
    <property type="evidence" value="ECO:0007669"/>
    <property type="project" value="UniProtKB-UniRule"/>
</dbReference>
<dbReference type="GO" id="GO:0006412">
    <property type="term" value="P:translation"/>
    <property type="evidence" value="ECO:0007669"/>
    <property type="project" value="InterPro"/>
</dbReference>
<dbReference type="CDD" id="cd07026">
    <property type="entry name" value="Ribosomal_L20"/>
    <property type="match status" value="1"/>
</dbReference>
<dbReference type="FunFam" id="1.10.1900.20:FF:000001">
    <property type="entry name" value="50S ribosomal protein L20"/>
    <property type="match status" value="1"/>
</dbReference>
<dbReference type="Gene3D" id="6.10.160.10">
    <property type="match status" value="1"/>
</dbReference>
<dbReference type="Gene3D" id="1.10.1900.20">
    <property type="entry name" value="Ribosomal protein L20"/>
    <property type="match status" value="1"/>
</dbReference>
<dbReference type="HAMAP" id="MF_00382">
    <property type="entry name" value="Ribosomal_bL20"/>
    <property type="match status" value="1"/>
</dbReference>
<dbReference type="InterPro" id="IPR005813">
    <property type="entry name" value="Ribosomal_bL20"/>
</dbReference>
<dbReference type="InterPro" id="IPR049946">
    <property type="entry name" value="RIBOSOMAL_L20_CS"/>
</dbReference>
<dbReference type="InterPro" id="IPR035566">
    <property type="entry name" value="Ribosomal_protein_bL20_C"/>
</dbReference>
<dbReference type="NCBIfam" id="TIGR01032">
    <property type="entry name" value="rplT_bact"/>
    <property type="match status" value="1"/>
</dbReference>
<dbReference type="PANTHER" id="PTHR10986">
    <property type="entry name" value="39S RIBOSOMAL PROTEIN L20"/>
    <property type="match status" value="1"/>
</dbReference>
<dbReference type="Pfam" id="PF00453">
    <property type="entry name" value="Ribosomal_L20"/>
    <property type="match status" value="1"/>
</dbReference>
<dbReference type="PRINTS" id="PR00062">
    <property type="entry name" value="RIBOSOMALL20"/>
</dbReference>
<dbReference type="SUPFAM" id="SSF74731">
    <property type="entry name" value="Ribosomal protein L20"/>
    <property type="match status" value="1"/>
</dbReference>
<dbReference type="PROSITE" id="PS00937">
    <property type="entry name" value="RIBOSOMAL_L20"/>
    <property type="match status" value="1"/>
</dbReference>
<comment type="function">
    <text evidence="1">Binds directly to 23S ribosomal RNA and is necessary for the in vitro assembly process of the 50S ribosomal subunit. It is not involved in the protein synthesizing functions of that subunit.</text>
</comment>
<comment type="similarity">
    <text evidence="1">Belongs to the bacterial ribosomal protein bL20 family.</text>
</comment>
<organism>
    <name type="scientific">Histophilus somni (strain 2336)</name>
    <name type="common">Haemophilus somnus</name>
    <dbReference type="NCBI Taxonomy" id="228400"/>
    <lineage>
        <taxon>Bacteria</taxon>
        <taxon>Pseudomonadati</taxon>
        <taxon>Pseudomonadota</taxon>
        <taxon>Gammaproteobacteria</taxon>
        <taxon>Pasteurellales</taxon>
        <taxon>Pasteurellaceae</taxon>
        <taxon>Histophilus</taxon>
    </lineage>
</organism>
<evidence type="ECO:0000255" key="1">
    <source>
        <dbReference type="HAMAP-Rule" id="MF_00382"/>
    </source>
</evidence>
<evidence type="ECO:0000305" key="2"/>
<reference key="1">
    <citation type="submission" date="2008-02" db="EMBL/GenBank/DDBJ databases">
        <title>Complete sequence of Haemophilus somnus 2336.</title>
        <authorList>
            <consortium name="US DOE Joint Genome Institute"/>
            <person name="Siddaramappa S."/>
            <person name="Duncan A.J."/>
            <person name="Challacombe J.F."/>
            <person name="Rainey D."/>
            <person name="Gillaspy A.F."/>
            <person name="Carson M."/>
            <person name="Gipson J."/>
            <person name="Gipson M."/>
            <person name="Bruce D."/>
            <person name="Detter J.C."/>
            <person name="Han C.S."/>
            <person name="Land M."/>
            <person name="Tapia R."/>
            <person name="Thompson L.S."/>
            <person name="Orvis J."/>
            <person name="Zaitshik J."/>
            <person name="Barnes G."/>
            <person name="Brettin T.S."/>
            <person name="Dyer D.W."/>
            <person name="Inzana T.J."/>
        </authorList>
    </citation>
    <scope>NUCLEOTIDE SEQUENCE [LARGE SCALE GENOMIC DNA]</scope>
    <source>
        <strain>2336</strain>
    </source>
</reference>
<gene>
    <name evidence="1" type="primary">rplT</name>
    <name type="ordered locus">HSM_1354</name>
</gene>
<feature type="chain" id="PRO_1000080076" description="Large ribosomal subunit protein bL20">
    <location>
        <begin position="1"/>
        <end position="117"/>
    </location>
</feature>
<proteinExistence type="inferred from homology"/>
<keyword id="KW-0687">Ribonucleoprotein</keyword>
<keyword id="KW-0689">Ribosomal protein</keyword>
<keyword id="KW-0694">RNA-binding</keyword>
<keyword id="KW-0699">rRNA-binding</keyword>
<accession>B0UU75</accession>
<name>RL20_HISS2</name>